<keyword id="KW-0002">3D-structure</keyword>
<keyword id="KW-0025">Alternative splicing</keyword>
<keyword id="KW-0903">Direct protein sequencing</keyword>
<keyword id="KW-0539">Nucleus</keyword>
<keyword id="KW-1185">Reference proteome</keyword>
<sequence>MAEESFYGVTLTAESDSVTWDVDEDYARGQKLVIKQILLGAEAKENEFNVVEVNTPKDSVQIPIAVLKAGETRAVNPDVEFYESKVTFKLIKGSGPVYIHGHNIKDDVEVVDMEEDDEEDDVAEDEEDEHPKKRAKIENAADGKNAKNNKKK</sequence>
<proteinExistence type="evidence at protein level"/>
<name>NLP_DROME</name>
<comment type="function">
    <text>Binds to core histones and functions in the ATP-facilitated assembly of approximately regularly spaced nucleosomal arrays. May participate in parallel with other histone-binding proteins such as NAP-1.</text>
</comment>
<comment type="function">
    <molecule>Isoform 2</molecule>
    <text>Inactive for chromatin assembly. In vitro it appears to form a high molecular mass aggregate with the core histones.</text>
</comment>
<comment type="subunit">
    <text evidence="2">Decamer formed by two pentameric rings associated in a head-to-head fashion.</text>
</comment>
<comment type="interaction">
    <interactant intactId="EBI-235255">
        <id>Q27415</id>
    </interactant>
    <interactant intactId="EBI-169874">
        <id>Q9VAC4</id>
        <label>Nph</label>
    </interactant>
    <organismsDiffer>false</organismsDiffer>
    <experiments>3</experiments>
</comment>
<comment type="subcellular location">
    <subcellularLocation>
        <location evidence="3 4">Nucleus</location>
    </subcellularLocation>
</comment>
<comment type="alternative products">
    <event type="alternative splicing"/>
    <isoform>
        <id>Q27415-1</id>
        <name>1</name>
        <name>Long</name>
        <name>DNLP</name>
        <sequence type="displayed"/>
    </isoform>
    <isoform>
        <id>Q27415-2</id>
        <name>2</name>
        <name>Short</name>
        <name>DNLP-S</name>
        <sequence type="described" ref="VSP_003618"/>
    </isoform>
</comment>
<comment type="developmental stage">
    <text evidence="3 4">Expressed both maternally and zygotically, present throughout development. Highest levels are found during oogenesis and in early embryos.</text>
</comment>
<comment type="similarity">
    <text evidence="6">Belongs to the nucleoplasmin family.</text>
</comment>
<feature type="chain" id="PRO_0000219493" description="Nucleoplasmin-like protein">
    <location>
        <begin position="1"/>
        <end position="152"/>
    </location>
</feature>
<feature type="region of interest" description="Disordered" evidence="1">
    <location>
        <begin position="109"/>
        <end position="152"/>
    </location>
</feature>
<feature type="compositionally biased region" description="Acidic residues" evidence="1">
    <location>
        <begin position="109"/>
        <end position="128"/>
    </location>
</feature>
<feature type="compositionally biased region" description="Basic and acidic residues" evidence="1">
    <location>
        <begin position="136"/>
        <end position="145"/>
    </location>
</feature>
<feature type="site" description="Interaction between pentamers" evidence="6">
    <location>
        <position position="45"/>
    </location>
</feature>
<feature type="site" description="Interaction between pentamers" evidence="6">
    <location>
        <position position="68"/>
    </location>
</feature>
<feature type="splice variant" id="VSP_003618" description="In isoform 2." evidence="5">
    <original>MAEESFYGVTLTAESDSVTWDVDEDYARGQKL</original>
    <variation>M</variation>
    <location>
        <begin position="1"/>
        <end position="32"/>
    </location>
</feature>
<feature type="strand" evidence="7">
    <location>
        <begin position="4"/>
        <end position="11"/>
    </location>
</feature>
<feature type="strand" evidence="7">
    <location>
        <begin position="17"/>
        <end position="20"/>
    </location>
</feature>
<feature type="strand" evidence="7">
    <location>
        <begin position="31"/>
        <end position="39"/>
    </location>
</feature>
<feature type="strand" evidence="7">
    <location>
        <begin position="48"/>
        <end position="55"/>
    </location>
</feature>
<feature type="helix" evidence="7">
    <location>
        <begin position="56"/>
        <end position="58"/>
    </location>
</feature>
<feature type="strand" evidence="7">
    <location>
        <begin position="60"/>
        <end position="69"/>
    </location>
</feature>
<feature type="strand" evidence="7">
    <location>
        <begin position="72"/>
        <end position="75"/>
    </location>
</feature>
<feature type="strand" evidence="7">
    <location>
        <begin position="79"/>
        <end position="84"/>
    </location>
</feature>
<feature type="strand" evidence="7">
    <location>
        <begin position="86"/>
        <end position="93"/>
    </location>
</feature>
<feature type="strand" evidence="7">
    <location>
        <begin position="97"/>
        <end position="104"/>
    </location>
</feature>
<organism>
    <name type="scientific">Drosophila melanogaster</name>
    <name type="common">Fruit fly</name>
    <dbReference type="NCBI Taxonomy" id="7227"/>
    <lineage>
        <taxon>Eukaryota</taxon>
        <taxon>Metazoa</taxon>
        <taxon>Ecdysozoa</taxon>
        <taxon>Arthropoda</taxon>
        <taxon>Hexapoda</taxon>
        <taxon>Insecta</taxon>
        <taxon>Pterygota</taxon>
        <taxon>Neoptera</taxon>
        <taxon>Endopterygota</taxon>
        <taxon>Diptera</taxon>
        <taxon>Brachycera</taxon>
        <taxon>Muscomorpha</taxon>
        <taxon>Ephydroidea</taxon>
        <taxon>Drosophilidae</taxon>
        <taxon>Drosophila</taxon>
        <taxon>Sophophora</taxon>
    </lineage>
</organism>
<protein>
    <recommendedName>
        <fullName>Nucleoplasmin-like protein</fullName>
    </recommendedName>
    <alternativeName>
        <fullName>Chromatin decondensation protein 1</fullName>
    </alternativeName>
    <alternativeName>
        <fullName>dNLP</fullName>
    </alternativeName>
</protein>
<accession>Q27415</accession>
<accession>Q24565</accession>
<accession>Q540W3</accession>
<accession>Q9VAC3</accession>
<gene>
    <name type="primary">Nlp</name>
    <name type="synonym">CRP1</name>
    <name type="ORF">CG7917</name>
</gene>
<reference key="1">
    <citation type="journal article" date="1996" name="J. Biol. Chem.">
        <title>ATP-facilitated chromatin assembly with a nucleoplasmin-like protein from Drosophila melanogaster.</title>
        <authorList>
            <person name="Ito T."/>
            <person name="Tyler J.K."/>
            <person name="Bulger M."/>
            <person name="Kobayashi R."/>
            <person name="Kadonaga J.T."/>
        </authorList>
    </citation>
    <scope>NUCLEOTIDE SEQUENCE [MRNA] (ISOFORMS 1 AND 2)</scope>
    <scope>PARTIAL PROTEIN SEQUENCE</scope>
    <scope>FUNCTION</scope>
    <scope>SUBCELLULAR LOCATION</scope>
    <scope>DEVELOPMENTAL STAGE</scope>
    <source>
        <tissue>Embryo</tissue>
    </source>
</reference>
<reference key="2">
    <citation type="journal article" date="1997" name="J. Struct. Biol.">
        <title>Molecular and cellular characterization of CRP1, a Drosophila chromatin decondensation protein.</title>
        <authorList>
            <person name="Crevel G.L."/>
            <person name="Huikeshoven H."/>
            <person name="Cotterill S."/>
            <person name="Simon M."/>
            <person name="Wall J."/>
            <person name="Philpott A."/>
            <person name="Laskey R.A."/>
            <person name="McConnell M."/>
            <person name="Fisher P.A."/>
            <person name="Berrios M."/>
        </authorList>
    </citation>
    <scope>NUCLEOTIDE SEQUENCE [MRNA] (ISOFORM 1)</scope>
    <scope>PROTEIN SEQUENCE OF 116-148</scope>
    <scope>FUNCTION</scope>
    <scope>SUBCELLULAR LOCATION</scope>
    <scope>DEVELOPMENTAL STAGE</scope>
</reference>
<reference key="3">
    <citation type="journal article" date="2000" name="Science">
        <title>The genome sequence of Drosophila melanogaster.</title>
        <authorList>
            <person name="Adams M.D."/>
            <person name="Celniker S.E."/>
            <person name="Holt R.A."/>
            <person name="Evans C.A."/>
            <person name="Gocayne J.D."/>
            <person name="Amanatides P.G."/>
            <person name="Scherer S.E."/>
            <person name="Li P.W."/>
            <person name="Hoskins R.A."/>
            <person name="Galle R.F."/>
            <person name="George R.A."/>
            <person name="Lewis S.E."/>
            <person name="Richards S."/>
            <person name="Ashburner M."/>
            <person name="Henderson S.N."/>
            <person name="Sutton G.G."/>
            <person name="Wortman J.R."/>
            <person name="Yandell M.D."/>
            <person name="Zhang Q."/>
            <person name="Chen L.X."/>
            <person name="Brandon R.C."/>
            <person name="Rogers Y.-H.C."/>
            <person name="Blazej R.G."/>
            <person name="Champe M."/>
            <person name="Pfeiffer B.D."/>
            <person name="Wan K.H."/>
            <person name="Doyle C."/>
            <person name="Baxter E.G."/>
            <person name="Helt G."/>
            <person name="Nelson C.R."/>
            <person name="Miklos G.L.G."/>
            <person name="Abril J.F."/>
            <person name="Agbayani A."/>
            <person name="An H.-J."/>
            <person name="Andrews-Pfannkoch C."/>
            <person name="Baldwin D."/>
            <person name="Ballew R.M."/>
            <person name="Basu A."/>
            <person name="Baxendale J."/>
            <person name="Bayraktaroglu L."/>
            <person name="Beasley E.M."/>
            <person name="Beeson K.Y."/>
            <person name="Benos P.V."/>
            <person name="Berman B.P."/>
            <person name="Bhandari D."/>
            <person name="Bolshakov S."/>
            <person name="Borkova D."/>
            <person name="Botchan M.R."/>
            <person name="Bouck J."/>
            <person name="Brokstein P."/>
            <person name="Brottier P."/>
            <person name="Burtis K.C."/>
            <person name="Busam D.A."/>
            <person name="Butler H."/>
            <person name="Cadieu E."/>
            <person name="Center A."/>
            <person name="Chandra I."/>
            <person name="Cherry J.M."/>
            <person name="Cawley S."/>
            <person name="Dahlke C."/>
            <person name="Davenport L.B."/>
            <person name="Davies P."/>
            <person name="de Pablos B."/>
            <person name="Delcher A."/>
            <person name="Deng Z."/>
            <person name="Mays A.D."/>
            <person name="Dew I."/>
            <person name="Dietz S.M."/>
            <person name="Dodson K."/>
            <person name="Doup L.E."/>
            <person name="Downes M."/>
            <person name="Dugan-Rocha S."/>
            <person name="Dunkov B.C."/>
            <person name="Dunn P."/>
            <person name="Durbin K.J."/>
            <person name="Evangelista C.C."/>
            <person name="Ferraz C."/>
            <person name="Ferriera S."/>
            <person name="Fleischmann W."/>
            <person name="Fosler C."/>
            <person name="Gabrielian A.E."/>
            <person name="Garg N.S."/>
            <person name="Gelbart W.M."/>
            <person name="Glasser K."/>
            <person name="Glodek A."/>
            <person name="Gong F."/>
            <person name="Gorrell J.H."/>
            <person name="Gu Z."/>
            <person name="Guan P."/>
            <person name="Harris M."/>
            <person name="Harris N.L."/>
            <person name="Harvey D.A."/>
            <person name="Heiman T.J."/>
            <person name="Hernandez J.R."/>
            <person name="Houck J."/>
            <person name="Hostin D."/>
            <person name="Houston K.A."/>
            <person name="Howland T.J."/>
            <person name="Wei M.-H."/>
            <person name="Ibegwam C."/>
            <person name="Jalali M."/>
            <person name="Kalush F."/>
            <person name="Karpen G.H."/>
            <person name="Ke Z."/>
            <person name="Kennison J.A."/>
            <person name="Ketchum K.A."/>
            <person name="Kimmel B.E."/>
            <person name="Kodira C.D."/>
            <person name="Kraft C.L."/>
            <person name="Kravitz S."/>
            <person name="Kulp D."/>
            <person name="Lai Z."/>
            <person name="Lasko P."/>
            <person name="Lei Y."/>
            <person name="Levitsky A.A."/>
            <person name="Li J.H."/>
            <person name="Li Z."/>
            <person name="Liang Y."/>
            <person name="Lin X."/>
            <person name="Liu X."/>
            <person name="Mattei B."/>
            <person name="McIntosh T.C."/>
            <person name="McLeod M.P."/>
            <person name="McPherson D."/>
            <person name="Merkulov G."/>
            <person name="Milshina N.V."/>
            <person name="Mobarry C."/>
            <person name="Morris J."/>
            <person name="Moshrefi A."/>
            <person name="Mount S.M."/>
            <person name="Moy M."/>
            <person name="Murphy B."/>
            <person name="Murphy L."/>
            <person name="Muzny D.M."/>
            <person name="Nelson D.L."/>
            <person name="Nelson D.R."/>
            <person name="Nelson K.A."/>
            <person name="Nixon K."/>
            <person name="Nusskern D.R."/>
            <person name="Pacleb J.M."/>
            <person name="Palazzolo M."/>
            <person name="Pittman G.S."/>
            <person name="Pan S."/>
            <person name="Pollard J."/>
            <person name="Puri V."/>
            <person name="Reese M.G."/>
            <person name="Reinert K."/>
            <person name="Remington K."/>
            <person name="Saunders R.D.C."/>
            <person name="Scheeler F."/>
            <person name="Shen H."/>
            <person name="Shue B.C."/>
            <person name="Siden-Kiamos I."/>
            <person name="Simpson M."/>
            <person name="Skupski M.P."/>
            <person name="Smith T.J."/>
            <person name="Spier E."/>
            <person name="Spradling A.C."/>
            <person name="Stapleton M."/>
            <person name="Strong R."/>
            <person name="Sun E."/>
            <person name="Svirskas R."/>
            <person name="Tector C."/>
            <person name="Turner R."/>
            <person name="Venter E."/>
            <person name="Wang A.H."/>
            <person name="Wang X."/>
            <person name="Wang Z.-Y."/>
            <person name="Wassarman D.A."/>
            <person name="Weinstock G.M."/>
            <person name="Weissenbach J."/>
            <person name="Williams S.M."/>
            <person name="Woodage T."/>
            <person name="Worley K.C."/>
            <person name="Wu D."/>
            <person name="Yang S."/>
            <person name="Yao Q.A."/>
            <person name="Ye J."/>
            <person name="Yeh R.-F."/>
            <person name="Zaveri J.S."/>
            <person name="Zhan M."/>
            <person name="Zhang G."/>
            <person name="Zhao Q."/>
            <person name="Zheng L."/>
            <person name="Zheng X.H."/>
            <person name="Zhong F.N."/>
            <person name="Zhong W."/>
            <person name="Zhou X."/>
            <person name="Zhu S.C."/>
            <person name="Zhu X."/>
            <person name="Smith H.O."/>
            <person name="Gibbs R.A."/>
            <person name="Myers E.W."/>
            <person name="Rubin G.M."/>
            <person name="Venter J.C."/>
        </authorList>
    </citation>
    <scope>NUCLEOTIDE SEQUENCE [LARGE SCALE GENOMIC DNA]</scope>
    <source>
        <strain>Berkeley</strain>
    </source>
</reference>
<reference key="4">
    <citation type="journal article" date="2002" name="Genome Biol.">
        <title>Annotation of the Drosophila melanogaster euchromatic genome: a systematic review.</title>
        <authorList>
            <person name="Misra S."/>
            <person name="Crosby M.A."/>
            <person name="Mungall C.J."/>
            <person name="Matthews B.B."/>
            <person name="Campbell K.S."/>
            <person name="Hradecky P."/>
            <person name="Huang Y."/>
            <person name="Kaminker J.S."/>
            <person name="Millburn G.H."/>
            <person name="Prochnik S.E."/>
            <person name="Smith C.D."/>
            <person name="Tupy J.L."/>
            <person name="Whitfield E.J."/>
            <person name="Bayraktaroglu L."/>
            <person name="Berman B.P."/>
            <person name="Bettencourt B.R."/>
            <person name="Celniker S.E."/>
            <person name="de Grey A.D.N.J."/>
            <person name="Drysdale R.A."/>
            <person name="Harris N.L."/>
            <person name="Richter J."/>
            <person name="Russo S."/>
            <person name="Schroeder A.J."/>
            <person name="Shu S.Q."/>
            <person name="Stapleton M."/>
            <person name="Yamada C."/>
            <person name="Ashburner M."/>
            <person name="Gelbart W.M."/>
            <person name="Rubin G.M."/>
            <person name="Lewis S.E."/>
        </authorList>
    </citation>
    <scope>GENOME REANNOTATION</scope>
    <source>
        <strain>Berkeley</strain>
    </source>
</reference>
<reference key="5">
    <citation type="journal article" date="2002" name="Genome Biol.">
        <title>A Drosophila full-length cDNA resource.</title>
        <authorList>
            <person name="Stapleton M."/>
            <person name="Carlson J.W."/>
            <person name="Brokstein P."/>
            <person name="Yu C."/>
            <person name="Champe M."/>
            <person name="George R.A."/>
            <person name="Guarin H."/>
            <person name="Kronmiller B."/>
            <person name="Pacleb J.M."/>
            <person name="Park S."/>
            <person name="Wan K.H."/>
            <person name="Rubin G.M."/>
            <person name="Celniker S.E."/>
        </authorList>
    </citation>
    <scope>NUCLEOTIDE SEQUENCE [LARGE SCALE MRNA]</scope>
    <source>
        <strain>Berkeley</strain>
        <tissue>Embryo</tissue>
    </source>
</reference>
<reference key="6">
    <citation type="journal article" date="2003" name="Structure">
        <title>The crystal structure of Drosophila NLP-core provides insight into pentamer formation and histone binding.</title>
        <authorList>
            <person name="Namboodiri V.M."/>
            <person name="Dutta S."/>
            <person name="Akey I.V."/>
            <person name="Head J.F."/>
            <person name="Akey C.W."/>
        </authorList>
    </citation>
    <scope>X-RAY CRYSTALLOGRAPHY (1.5 ANGSTROMS) OF 1-108</scope>
    <scope>SUBUNIT</scope>
</reference>
<dbReference type="EMBL" id="U59497">
    <property type="protein sequence ID" value="AAC47294.1"/>
    <property type="molecule type" value="mRNA"/>
</dbReference>
<dbReference type="EMBL" id="U59498">
    <property type="protein sequence ID" value="AAC47295.1"/>
    <property type="molecule type" value="mRNA"/>
</dbReference>
<dbReference type="EMBL" id="X99293">
    <property type="protein sequence ID" value="CAA67679.1"/>
    <property type="molecule type" value="mRNA"/>
</dbReference>
<dbReference type="EMBL" id="AE014297">
    <property type="protein sequence ID" value="AAF56988.1"/>
    <property type="molecule type" value="Genomic_DNA"/>
</dbReference>
<dbReference type="EMBL" id="AY119592">
    <property type="protein sequence ID" value="AAM50246.1"/>
    <property type="molecule type" value="mRNA"/>
</dbReference>
<dbReference type="RefSeq" id="NP_001263094.1">
    <molecule id="Q27415-1"/>
    <property type="nucleotide sequence ID" value="NM_001276165.1"/>
</dbReference>
<dbReference type="RefSeq" id="NP_524557.1">
    <molecule id="Q27415-1"/>
    <property type="nucleotide sequence ID" value="NM_079833.2"/>
</dbReference>
<dbReference type="PDB" id="1NLQ">
    <property type="method" value="X-ray"/>
    <property type="resolution" value="1.50 A"/>
    <property type="chains" value="A/B/C/D/E=1-108"/>
</dbReference>
<dbReference type="PDBsum" id="1NLQ"/>
<dbReference type="SMR" id="Q27415"/>
<dbReference type="BioGRID" id="68416">
    <property type="interactions" value="97"/>
</dbReference>
<dbReference type="DIP" id="DIP-21663N"/>
<dbReference type="FunCoup" id="Q27415">
    <property type="interactions" value="959"/>
</dbReference>
<dbReference type="IntAct" id="Q27415">
    <property type="interactions" value="146"/>
</dbReference>
<dbReference type="STRING" id="7227.FBpp0084918"/>
<dbReference type="iPTMnet" id="Q27415"/>
<dbReference type="PaxDb" id="7227-FBpp0084918"/>
<dbReference type="DNASU" id="43560"/>
<dbReference type="EnsemblMetazoa" id="FBtr0085552">
    <molecule id="Q27415-1"/>
    <property type="protein sequence ID" value="FBpp0084918"/>
    <property type="gene ID" value="FBgn0016685"/>
</dbReference>
<dbReference type="EnsemblMetazoa" id="FBtr0334701">
    <molecule id="Q27415-1"/>
    <property type="protein sequence ID" value="FBpp0306756"/>
    <property type="gene ID" value="FBgn0016685"/>
</dbReference>
<dbReference type="GeneID" id="43560"/>
<dbReference type="KEGG" id="dme:Dmel_CG7917"/>
<dbReference type="AGR" id="FB:FBgn0016685"/>
<dbReference type="CTD" id="43560"/>
<dbReference type="FlyBase" id="FBgn0016685">
    <property type="gene designation" value="Nlp"/>
</dbReference>
<dbReference type="VEuPathDB" id="VectorBase:FBgn0016685"/>
<dbReference type="eggNOG" id="ENOG502S1E6">
    <property type="taxonomic scope" value="Eukaryota"/>
</dbReference>
<dbReference type="GeneTree" id="ENSGT00730000113508"/>
<dbReference type="HOGENOM" id="CLU_097031_1_0_1"/>
<dbReference type="InParanoid" id="Q27415"/>
<dbReference type="OMA" id="ETMTIRD"/>
<dbReference type="OrthoDB" id="6075101at2759"/>
<dbReference type="PhylomeDB" id="Q27415"/>
<dbReference type="Reactome" id="R-DME-3899300">
    <property type="pathway name" value="SUMOylation of transcription cofactors"/>
</dbReference>
<dbReference type="Reactome" id="R-DME-8869496">
    <property type="pathway name" value="TFAP2A acts as a transcriptional repressor during retinoic acid induced cell differentiation"/>
</dbReference>
<dbReference type="Reactome" id="R-DME-9833482">
    <property type="pathway name" value="PKR-mediated signaling"/>
</dbReference>
<dbReference type="BioGRID-ORCS" id="43560">
    <property type="hits" value="1 hit in 3 CRISPR screens"/>
</dbReference>
<dbReference type="ChiTaRS" id="Nlp">
    <property type="organism name" value="fly"/>
</dbReference>
<dbReference type="EvolutionaryTrace" id="Q27415"/>
<dbReference type="GenomeRNAi" id="43560"/>
<dbReference type="PRO" id="PR:Q27415"/>
<dbReference type="Proteomes" id="UP000000803">
    <property type="component" value="Chromosome 3R"/>
</dbReference>
<dbReference type="Bgee" id="FBgn0016685">
    <property type="expression patterns" value="Expressed in eye disc (Drosophila) and 210 other cell types or tissues"/>
</dbReference>
<dbReference type="ExpressionAtlas" id="Q27415">
    <property type="expression patterns" value="baseline and differential"/>
</dbReference>
<dbReference type="GO" id="GO:0005737">
    <property type="term" value="C:cytoplasm"/>
    <property type="evidence" value="ECO:0000314"/>
    <property type="project" value="FlyBase"/>
</dbReference>
<dbReference type="GO" id="GO:0005730">
    <property type="term" value="C:nucleolus"/>
    <property type="evidence" value="ECO:0000314"/>
    <property type="project" value="FlyBase"/>
</dbReference>
<dbReference type="GO" id="GO:0005654">
    <property type="term" value="C:nucleoplasm"/>
    <property type="evidence" value="ECO:0007005"/>
    <property type="project" value="FlyBase"/>
</dbReference>
<dbReference type="GO" id="GO:0005634">
    <property type="term" value="C:nucleus"/>
    <property type="evidence" value="ECO:0000314"/>
    <property type="project" value="FlyBase"/>
</dbReference>
<dbReference type="GO" id="GO:0003682">
    <property type="term" value="F:chromatin binding"/>
    <property type="evidence" value="ECO:0000318"/>
    <property type="project" value="GO_Central"/>
</dbReference>
<dbReference type="GO" id="GO:0042393">
    <property type="term" value="F:histone binding"/>
    <property type="evidence" value="ECO:0000314"/>
    <property type="project" value="FlyBase"/>
</dbReference>
<dbReference type="GO" id="GO:0003723">
    <property type="term" value="F:RNA binding"/>
    <property type="evidence" value="ECO:0000318"/>
    <property type="project" value="GO_Central"/>
</dbReference>
<dbReference type="GO" id="GO:0006338">
    <property type="term" value="P:chromatin remodeling"/>
    <property type="evidence" value="ECO:0000314"/>
    <property type="project" value="FlyBase"/>
</dbReference>
<dbReference type="GO" id="GO:0035041">
    <property type="term" value="P:sperm DNA decondensation"/>
    <property type="evidence" value="ECO:0000314"/>
    <property type="project" value="FlyBase"/>
</dbReference>
<dbReference type="FunFam" id="2.60.120.340:FF:000005">
    <property type="entry name" value="nucleoplasmin-like protein"/>
    <property type="match status" value="1"/>
</dbReference>
<dbReference type="Gene3D" id="2.60.120.340">
    <property type="entry name" value="Nucleoplasmin core domain"/>
    <property type="match status" value="1"/>
</dbReference>
<dbReference type="InterPro" id="IPR004301">
    <property type="entry name" value="Nucleoplasmin"/>
</dbReference>
<dbReference type="InterPro" id="IPR024057">
    <property type="entry name" value="Nucleoplasmin_core_dom"/>
</dbReference>
<dbReference type="InterPro" id="IPR036824">
    <property type="entry name" value="Nucleoplasmin_core_dom_sf"/>
</dbReference>
<dbReference type="PANTHER" id="PTHR22747:SF18">
    <property type="entry name" value="GEO09167P1-RELATED"/>
    <property type="match status" value="1"/>
</dbReference>
<dbReference type="PANTHER" id="PTHR22747">
    <property type="entry name" value="NUCLEOPLASMIN"/>
    <property type="match status" value="1"/>
</dbReference>
<dbReference type="Pfam" id="PF03066">
    <property type="entry name" value="Nucleoplasmin"/>
    <property type="match status" value="1"/>
</dbReference>
<dbReference type="SUPFAM" id="SSF69203">
    <property type="entry name" value="Nucleoplasmin-like core domain"/>
    <property type="match status" value="1"/>
</dbReference>
<evidence type="ECO:0000256" key="1">
    <source>
        <dbReference type="SAM" id="MobiDB-lite"/>
    </source>
</evidence>
<evidence type="ECO:0000269" key="2">
    <source>
    </source>
</evidence>
<evidence type="ECO:0000269" key="3">
    <source>
    </source>
</evidence>
<evidence type="ECO:0000269" key="4">
    <source>
    </source>
</evidence>
<evidence type="ECO:0000303" key="5">
    <source>
    </source>
</evidence>
<evidence type="ECO:0000305" key="6"/>
<evidence type="ECO:0007829" key="7">
    <source>
        <dbReference type="PDB" id="1NLQ"/>
    </source>
</evidence>